<comment type="catalytic activity">
    <reaction evidence="1">
        <text>5-amino-1-(5-phospho-D-ribosyl)imidazole-4-carboxylate + L-aspartate + ATP = (2S)-2-[5-amino-1-(5-phospho-beta-D-ribosyl)imidazole-4-carboxamido]succinate + ADP + phosphate + 2 H(+)</text>
        <dbReference type="Rhea" id="RHEA:22628"/>
        <dbReference type="ChEBI" id="CHEBI:15378"/>
        <dbReference type="ChEBI" id="CHEBI:29991"/>
        <dbReference type="ChEBI" id="CHEBI:30616"/>
        <dbReference type="ChEBI" id="CHEBI:43474"/>
        <dbReference type="ChEBI" id="CHEBI:58443"/>
        <dbReference type="ChEBI" id="CHEBI:77657"/>
        <dbReference type="ChEBI" id="CHEBI:456216"/>
        <dbReference type="EC" id="6.3.2.6"/>
    </reaction>
</comment>
<comment type="pathway">
    <text evidence="1">Purine metabolism; IMP biosynthesis via de novo pathway; 5-amino-1-(5-phospho-D-ribosyl)imidazole-4-carboxamide from 5-amino-1-(5-phospho-D-ribosyl)imidazole-4-carboxylate: step 1/2.</text>
</comment>
<comment type="similarity">
    <text evidence="1">Belongs to the SAICAR synthetase family.</text>
</comment>
<gene>
    <name evidence="1" type="primary">purC</name>
    <name type="ordered locus">Cmaq_0664</name>
</gene>
<accession>A8MCJ8</accession>
<name>PUR7_CALMQ</name>
<proteinExistence type="inferred from homology"/>
<feature type="chain" id="PRO_1000117828" description="Phosphoribosylaminoimidazole-succinocarboxamide synthase">
    <location>
        <begin position="1"/>
        <end position="241"/>
    </location>
</feature>
<evidence type="ECO:0000255" key="1">
    <source>
        <dbReference type="HAMAP-Rule" id="MF_00137"/>
    </source>
</evidence>
<sequence>MSLGEGKLIYEGKAKRVYLINNEELVMEFKDEVTALDGARKEYAPGKGKLAASQTAFFMSYLNESGVRTHFINWDGDRRIHVRRLRMIPVEVIVRNYAYGSFIRRMPLIKPLTKFTTPLVEFHLKNDELHDPLILIEDIIEAGLTSMEQVMEIRSVSLKVNHLLSELLGKYGLTLVDFKLEFGVNSNGALVLADELSGDTMRVLMNGKHLDKELFRMGGSVKELIEAYSRLNSILGLGLKG</sequence>
<keyword id="KW-0067">ATP-binding</keyword>
<keyword id="KW-0436">Ligase</keyword>
<keyword id="KW-0547">Nucleotide-binding</keyword>
<keyword id="KW-0658">Purine biosynthesis</keyword>
<keyword id="KW-1185">Reference proteome</keyword>
<protein>
    <recommendedName>
        <fullName evidence="1">Phosphoribosylaminoimidazole-succinocarboxamide synthase</fullName>
        <ecNumber evidence="1">6.3.2.6</ecNumber>
    </recommendedName>
    <alternativeName>
        <fullName evidence="1">SAICAR synthetase</fullName>
    </alternativeName>
</protein>
<dbReference type="EC" id="6.3.2.6" evidence="1"/>
<dbReference type="EMBL" id="CP000852">
    <property type="protein sequence ID" value="ABW01504.1"/>
    <property type="molecule type" value="Genomic_DNA"/>
</dbReference>
<dbReference type="RefSeq" id="WP_012185724.1">
    <property type="nucleotide sequence ID" value="NC_009954.1"/>
</dbReference>
<dbReference type="SMR" id="A8MCJ8"/>
<dbReference type="STRING" id="397948.Cmaq_0664"/>
<dbReference type="GeneID" id="5710295"/>
<dbReference type="KEGG" id="cma:Cmaq_0664"/>
<dbReference type="eggNOG" id="arCOG04421">
    <property type="taxonomic scope" value="Archaea"/>
</dbReference>
<dbReference type="HOGENOM" id="CLU_061495_0_0_2"/>
<dbReference type="OrthoDB" id="10775at2157"/>
<dbReference type="UniPathway" id="UPA00074">
    <property type="reaction ID" value="UER00131"/>
</dbReference>
<dbReference type="Proteomes" id="UP000001137">
    <property type="component" value="Chromosome"/>
</dbReference>
<dbReference type="GO" id="GO:0005524">
    <property type="term" value="F:ATP binding"/>
    <property type="evidence" value="ECO:0007669"/>
    <property type="project" value="UniProtKB-KW"/>
</dbReference>
<dbReference type="GO" id="GO:0004639">
    <property type="term" value="F:phosphoribosylaminoimidazolesuccinocarboxamide synthase activity"/>
    <property type="evidence" value="ECO:0007669"/>
    <property type="project" value="UniProtKB-UniRule"/>
</dbReference>
<dbReference type="GO" id="GO:0006189">
    <property type="term" value="P:'de novo' IMP biosynthetic process"/>
    <property type="evidence" value="ECO:0007669"/>
    <property type="project" value="UniProtKB-UniRule"/>
</dbReference>
<dbReference type="GO" id="GO:0009236">
    <property type="term" value="P:cobalamin biosynthetic process"/>
    <property type="evidence" value="ECO:0007669"/>
    <property type="project" value="InterPro"/>
</dbReference>
<dbReference type="CDD" id="cd01415">
    <property type="entry name" value="SAICAR_synt_PurC"/>
    <property type="match status" value="1"/>
</dbReference>
<dbReference type="Gene3D" id="3.30.470.20">
    <property type="entry name" value="ATP-grasp fold, B domain"/>
    <property type="match status" value="1"/>
</dbReference>
<dbReference type="Gene3D" id="3.30.200.20">
    <property type="entry name" value="Phosphorylase Kinase, domain 1"/>
    <property type="match status" value="1"/>
</dbReference>
<dbReference type="HAMAP" id="MF_00137">
    <property type="entry name" value="SAICAR_synth"/>
    <property type="match status" value="1"/>
</dbReference>
<dbReference type="InterPro" id="IPR028923">
    <property type="entry name" value="SAICAR_synt/ADE2_N"/>
</dbReference>
<dbReference type="InterPro" id="IPR033934">
    <property type="entry name" value="SAICAR_synt_PurC"/>
</dbReference>
<dbReference type="InterPro" id="IPR050089">
    <property type="entry name" value="SAICAR_synthetase"/>
</dbReference>
<dbReference type="InterPro" id="IPR018236">
    <property type="entry name" value="SAICAR_synthetase_CS"/>
</dbReference>
<dbReference type="PANTHER" id="PTHR43599">
    <property type="entry name" value="MULTIFUNCTIONAL PROTEIN ADE2"/>
    <property type="match status" value="1"/>
</dbReference>
<dbReference type="PANTHER" id="PTHR43599:SF3">
    <property type="entry name" value="SI:DKEY-6E2.2"/>
    <property type="match status" value="1"/>
</dbReference>
<dbReference type="Pfam" id="PF01259">
    <property type="entry name" value="SAICAR_synt"/>
    <property type="match status" value="1"/>
</dbReference>
<dbReference type="SUPFAM" id="SSF56104">
    <property type="entry name" value="SAICAR synthase-like"/>
    <property type="match status" value="1"/>
</dbReference>
<dbReference type="PROSITE" id="PS01057">
    <property type="entry name" value="SAICAR_SYNTHETASE_1"/>
    <property type="match status" value="1"/>
</dbReference>
<dbReference type="PROSITE" id="PS01058">
    <property type="entry name" value="SAICAR_SYNTHETASE_2"/>
    <property type="match status" value="1"/>
</dbReference>
<reference key="1">
    <citation type="submission" date="2007-10" db="EMBL/GenBank/DDBJ databases">
        <title>Complete sequence of Caldivirga maquilingensis IC-167.</title>
        <authorList>
            <consortium name="US DOE Joint Genome Institute"/>
            <person name="Copeland A."/>
            <person name="Lucas S."/>
            <person name="Lapidus A."/>
            <person name="Barry K."/>
            <person name="Glavina del Rio T."/>
            <person name="Dalin E."/>
            <person name="Tice H."/>
            <person name="Pitluck S."/>
            <person name="Saunders E."/>
            <person name="Brettin T."/>
            <person name="Bruce D."/>
            <person name="Detter J.C."/>
            <person name="Han C."/>
            <person name="Schmutz J."/>
            <person name="Larimer F."/>
            <person name="Land M."/>
            <person name="Hauser L."/>
            <person name="Kyrpides N."/>
            <person name="Ivanova N."/>
            <person name="Biddle J.F."/>
            <person name="Zhang Z."/>
            <person name="Fitz-Gibbon S.T."/>
            <person name="Lowe T.M."/>
            <person name="Saltikov C."/>
            <person name="House C.H."/>
            <person name="Richardson P."/>
        </authorList>
    </citation>
    <scope>NUCLEOTIDE SEQUENCE [LARGE SCALE GENOMIC DNA]</scope>
    <source>
        <strain>ATCC 700844 / DSM 13496 / JCM 10307 / IC-167</strain>
    </source>
</reference>
<organism>
    <name type="scientific">Caldivirga maquilingensis (strain ATCC 700844 / DSM 13496 / JCM 10307 / IC-167)</name>
    <dbReference type="NCBI Taxonomy" id="397948"/>
    <lineage>
        <taxon>Archaea</taxon>
        <taxon>Thermoproteota</taxon>
        <taxon>Thermoprotei</taxon>
        <taxon>Thermoproteales</taxon>
        <taxon>Thermoproteaceae</taxon>
        <taxon>Caldivirga</taxon>
    </lineage>
</organism>